<dbReference type="SMR" id="P61096"/>
<dbReference type="ArachnoServer" id="AS000117">
    <property type="toxin name" value="mu-segestritoxin-Sf1b"/>
</dbReference>
<dbReference type="GO" id="GO:0005576">
    <property type="term" value="C:extracellular region"/>
    <property type="evidence" value="ECO:0007669"/>
    <property type="project" value="UniProtKB-SubCell"/>
</dbReference>
<dbReference type="GO" id="GO:0090729">
    <property type="term" value="F:toxin activity"/>
    <property type="evidence" value="ECO:0007669"/>
    <property type="project" value="UniProtKB-KW"/>
</dbReference>
<dbReference type="Gene3D" id="4.10.40.60">
    <property type="match status" value="1"/>
</dbReference>
<dbReference type="InterPro" id="IPR053718">
    <property type="entry name" value="Insecticidal_knottin-like_sf"/>
</dbReference>
<dbReference type="InterPro" id="IPR012633">
    <property type="entry name" value="Toxin_28"/>
</dbReference>
<dbReference type="Pfam" id="PF08115">
    <property type="entry name" value="Toxin_28"/>
    <property type="match status" value="1"/>
</dbReference>
<comment type="function">
    <text evidence="2">Insecticidal toxin. Causes flaccid paralysis followed by death when injected into Heliothis virescens larvae. Does not induce any toxic effects when injected intravenously into adult mice at a dose of 1.25 mg/kg body weight.</text>
</comment>
<comment type="subcellular location">
    <subcellularLocation>
        <location evidence="2">Secreted</location>
    </subcellularLocation>
</comment>
<comment type="tissue specificity">
    <text evidence="5">Expressed by the venom gland.</text>
</comment>
<comment type="domain">
    <text evidence="1">The presence of a 'disulfide through disulfide knot' structurally defines this protein as a knottin.</text>
</comment>
<comment type="mass spectrometry"/>
<comment type="toxic dose">
    <text evidence="2">LD(50) is 7 mg/kg on H.virescens larvae.</text>
</comment>
<comment type="similarity">
    <text evidence="4">Belongs to the neurotoxin 16 (SFI) family.</text>
</comment>
<comment type="caution">
    <text evidence="4">Mass spectrometry experiment was done on the entire protein whose known sequence is incomplete (sequence of 1-18). The difference between measured (4993) and calculated (5136) mass resides in the fact that the sequence of this entire protein is maybe not identical to the sequence shown.</text>
</comment>
<sequence>KECMADETVCYIHNHNNCCGSCLCLNGPYARPWEMLVGNCKCGPKE</sequence>
<accession>P61096</accession>
<proteinExistence type="evidence at protein level"/>
<organism>
    <name type="scientific">Segestria florentina</name>
    <name type="common">Tube-web spider</name>
    <name type="synonym">Segestria gracilis</name>
    <dbReference type="NCBI Taxonomy" id="31925"/>
    <lineage>
        <taxon>Eukaryota</taxon>
        <taxon>Metazoa</taxon>
        <taxon>Ecdysozoa</taxon>
        <taxon>Arthropoda</taxon>
        <taxon>Chelicerata</taxon>
        <taxon>Arachnida</taxon>
        <taxon>Araneae</taxon>
        <taxon>Araneomorphae</taxon>
        <taxon>Haplogynae</taxon>
        <taxon>Dysderoidea</taxon>
        <taxon>Segestriidae</taxon>
        <taxon>Segestria</taxon>
    </lineage>
</organism>
<reference key="1">
    <citation type="journal article" date="2002" name="Toxicon">
        <title>Novel insecticidal toxins from the venom of the spider Segestria florentina.</title>
        <authorList>
            <person name="Lipkin A."/>
            <person name="Kozlov S."/>
            <person name="Nosyreva E."/>
            <person name="Blake A."/>
            <person name="Windass J.D."/>
            <person name="Grishin E."/>
        </authorList>
    </citation>
    <scope>NUCLEOTIDE SEQUENCE [MRNA]</scope>
    <scope>PROTEIN SEQUENCE OF 1-18</scope>
    <scope>FUNCTION</scope>
    <scope>SUBCELLULAR LOCATION</scope>
    <scope>MASS SPECTROMETRY</scope>
    <scope>TOXIC DOSE</scope>
    <source>
        <tissue>Venom</tissue>
        <tissue>Venom gland</tissue>
    </source>
</reference>
<protein>
    <recommendedName>
        <fullName evidence="4">Mu-segestritoxin-Sf1b</fullName>
        <shortName evidence="4">Mu-SGTX-Sf1b</shortName>
    </recommendedName>
    <alternativeName>
        <fullName evidence="3">F5.7</fullName>
    </alternativeName>
    <alternativeName>
        <fullName evidence="3">Toxin SFI2</fullName>
    </alternativeName>
</protein>
<name>SFI2_SEGFL</name>
<feature type="chain" id="PRO_0000087617" description="Mu-segestritoxin-Sf1b" evidence="5">
    <location>
        <begin position="1"/>
        <end position="46"/>
    </location>
</feature>
<feature type="region of interest" description="Keys region for toxin activity" evidence="1">
    <location>
        <begin position="31"/>
        <end position="33"/>
    </location>
</feature>
<feature type="disulfide bond" evidence="1">
    <location>
        <begin position="3"/>
        <end position="19"/>
    </location>
</feature>
<feature type="disulfide bond" evidence="1">
    <location>
        <begin position="10"/>
        <end position="22"/>
    </location>
</feature>
<feature type="disulfide bond" evidence="1">
    <location>
        <begin position="18"/>
        <end position="42"/>
    </location>
</feature>
<feature type="disulfide bond" evidence="1">
    <location>
        <begin position="24"/>
        <end position="40"/>
    </location>
</feature>
<evidence type="ECO:0000250" key="1">
    <source>
        <dbReference type="UniProtKB" id="P61095"/>
    </source>
</evidence>
<evidence type="ECO:0000269" key="2">
    <source>
    </source>
</evidence>
<evidence type="ECO:0000303" key="3">
    <source>
    </source>
</evidence>
<evidence type="ECO:0000305" key="4"/>
<evidence type="ECO:0000305" key="5">
    <source>
    </source>
</evidence>
<keyword id="KW-0903">Direct protein sequencing</keyword>
<keyword id="KW-1015">Disulfide bond</keyword>
<keyword id="KW-0960">Knottin</keyword>
<keyword id="KW-0964">Secreted</keyword>
<keyword id="KW-0800">Toxin</keyword>